<accession>Q99819</accession>
<accession>Q4TT69</accession>
<accession>Q96S29</accession>
<reference key="1">
    <citation type="journal article" date="1997" name="Proc. Natl. Acad. Sci. U.S.A.">
        <title>RhoGDIgamma: a GDP-dissociation inhibitor for Rho proteins with preferential expression in brain and pancreas.</title>
        <authorList>
            <person name="Adra C.N."/>
            <person name="Manor D."/>
            <person name="Ko J.L."/>
            <person name="Zhu S."/>
            <person name="Horiuchi T."/>
            <person name="van Aelst L."/>
            <person name="Cerione R.A."/>
            <person name="Lim B."/>
        </authorList>
    </citation>
    <scope>NUCLEOTIDE SEQUENCE [MRNA]</scope>
    <source>
        <tissue>Brain</tissue>
    </source>
</reference>
<reference key="2">
    <citation type="journal article" date="1998" name="Genomics">
        <title>Human ARHGDIG, a GDP-dissociation inhibitor for Rho proteins: genomic structure, sequence, expression analysis, and mapping to chromosome 16p13.3.</title>
        <authorList>
            <person name="Adra C.N."/>
            <person name="Iyengar A.R."/>
            <person name="Syed F.A."/>
            <person name="Kanaan I.N."/>
            <person name="Rilo H.L.R."/>
            <person name="Yu W."/>
            <person name="Kheraj R."/>
            <person name="Lin S.R."/>
            <person name="Horiuchi T."/>
            <person name="Khan S."/>
            <person name="Weremowicz S."/>
            <person name="Lim B."/>
            <person name="Morton C.C."/>
            <person name="Higgs D.R."/>
        </authorList>
    </citation>
    <scope>NUCLEOTIDE SEQUENCE [GENOMIC DNA]</scope>
</reference>
<reference key="3">
    <citation type="submission" date="2003-11" db="EMBL/GenBank/DDBJ databases">
        <title>A human polycistronic mRNA composed of ARHGDIG and PDIP.</title>
        <authorList>
            <person name="Hayashi A."/>
            <person name="Tabata Y."/>
            <person name="Sato S."/>
            <person name="Mitsuyama M."/>
            <person name="Kanai S."/>
            <person name="Furuya T."/>
            <person name="Saito T."/>
        </authorList>
    </citation>
    <scope>NUCLEOTIDE SEQUENCE [MRNA]</scope>
</reference>
<reference key="4">
    <citation type="submission" date="2002-04" db="EMBL/GenBank/DDBJ databases">
        <title>cDNA clones of human proteins involved in signal transduction sequenced by the Guthrie cDNA resource center (www.cdna.org).</title>
        <authorList>
            <person name="Puhl H.L. III"/>
            <person name="Ikeda S.R."/>
            <person name="Aronstam R.S."/>
        </authorList>
    </citation>
    <scope>NUCLEOTIDE SEQUENCE [LARGE SCALE MRNA]</scope>
    <source>
        <tissue>Brain</tissue>
    </source>
</reference>
<reference key="5">
    <citation type="journal article" date="2001" name="Hum. Mol. Genet.">
        <title>Sequence, structure and pathology of the fully annotated terminal 2 Mb of the short arm of human chromosome 16.</title>
        <authorList>
            <person name="Daniels R.J."/>
            <person name="Peden J.F."/>
            <person name="Lloyd C."/>
            <person name="Horsley S.W."/>
            <person name="Clark K."/>
            <person name="Tufarelli C."/>
            <person name="Kearney L."/>
            <person name="Buckle V.J."/>
            <person name="Doggett N.A."/>
            <person name="Flint J."/>
            <person name="Higgs D.R."/>
        </authorList>
    </citation>
    <scope>NUCLEOTIDE SEQUENCE [LARGE SCALE GENOMIC DNA]</scope>
</reference>
<reference key="6">
    <citation type="journal article" date="2004" name="Nature">
        <title>The sequence and analysis of duplication-rich human chromosome 16.</title>
        <authorList>
            <person name="Martin J."/>
            <person name="Han C."/>
            <person name="Gordon L.A."/>
            <person name="Terry A."/>
            <person name="Prabhakar S."/>
            <person name="She X."/>
            <person name="Xie G."/>
            <person name="Hellsten U."/>
            <person name="Chan Y.M."/>
            <person name="Altherr M."/>
            <person name="Couronne O."/>
            <person name="Aerts A."/>
            <person name="Bajorek E."/>
            <person name="Black S."/>
            <person name="Blumer H."/>
            <person name="Branscomb E."/>
            <person name="Brown N.C."/>
            <person name="Bruno W.J."/>
            <person name="Buckingham J.M."/>
            <person name="Callen D.F."/>
            <person name="Campbell C.S."/>
            <person name="Campbell M.L."/>
            <person name="Campbell E.W."/>
            <person name="Caoile C."/>
            <person name="Challacombe J.F."/>
            <person name="Chasteen L.A."/>
            <person name="Chertkov O."/>
            <person name="Chi H.C."/>
            <person name="Christensen M."/>
            <person name="Clark L.M."/>
            <person name="Cohn J.D."/>
            <person name="Denys M."/>
            <person name="Detter J.C."/>
            <person name="Dickson M."/>
            <person name="Dimitrijevic-Bussod M."/>
            <person name="Escobar J."/>
            <person name="Fawcett J.J."/>
            <person name="Flowers D."/>
            <person name="Fotopulos D."/>
            <person name="Glavina T."/>
            <person name="Gomez M."/>
            <person name="Gonzales E."/>
            <person name="Goodstein D."/>
            <person name="Goodwin L.A."/>
            <person name="Grady D.L."/>
            <person name="Grigoriev I."/>
            <person name="Groza M."/>
            <person name="Hammon N."/>
            <person name="Hawkins T."/>
            <person name="Haydu L."/>
            <person name="Hildebrand C.E."/>
            <person name="Huang W."/>
            <person name="Israni S."/>
            <person name="Jett J."/>
            <person name="Jewett P.B."/>
            <person name="Kadner K."/>
            <person name="Kimball H."/>
            <person name="Kobayashi A."/>
            <person name="Krawczyk M.-C."/>
            <person name="Leyba T."/>
            <person name="Longmire J.L."/>
            <person name="Lopez F."/>
            <person name="Lou Y."/>
            <person name="Lowry S."/>
            <person name="Ludeman T."/>
            <person name="Manohar C.F."/>
            <person name="Mark G.A."/>
            <person name="McMurray K.L."/>
            <person name="Meincke L.J."/>
            <person name="Morgan J."/>
            <person name="Moyzis R.K."/>
            <person name="Mundt M.O."/>
            <person name="Munk A.C."/>
            <person name="Nandkeshwar R.D."/>
            <person name="Pitluck S."/>
            <person name="Pollard M."/>
            <person name="Predki P."/>
            <person name="Parson-Quintana B."/>
            <person name="Ramirez L."/>
            <person name="Rash S."/>
            <person name="Retterer J."/>
            <person name="Ricke D.O."/>
            <person name="Robinson D.L."/>
            <person name="Rodriguez A."/>
            <person name="Salamov A."/>
            <person name="Saunders E.H."/>
            <person name="Scott D."/>
            <person name="Shough T."/>
            <person name="Stallings R.L."/>
            <person name="Stalvey M."/>
            <person name="Sutherland R.D."/>
            <person name="Tapia R."/>
            <person name="Tesmer J.G."/>
            <person name="Thayer N."/>
            <person name="Thompson L.S."/>
            <person name="Tice H."/>
            <person name="Torney D.C."/>
            <person name="Tran-Gyamfi M."/>
            <person name="Tsai M."/>
            <person name="Ulanovsky L.E."/>
            <person name="Ustaszewska A."/>
            <person name="Vo N."/>
            <person name="White P.S."/>
            <person name="Williams A.L."/>
            <person name="Wills P.L."/>
            <person name="Wu J.-R."/>
            <person name="Wu K."/>
            <person name="Yang J."/>
            <person name="DeJong P."/>
            <person name="Bruce D."/>
            <person name="Doggett N.A."/>
            <person name="Deaven L."/>
            <person name="Schmutz J."/>
            <person name="Grimwood J."/>
            <person name="Richardson P."/>
            <person name="Rokhsar D.S."/>
            <person name="Eichler E.E."/>
            <person name="Gilna P."/>
            <person name="Lucas S.M."/>
            <person name="Myers R.M."/>
            <person name="Rubin E.M."/>
            <person name="Pennacchio L.A."/>
        </authorList>
    </citation>
    <scope>NUCLEOTIDE SEQUENCE [LARGE SCALE GENOMIC DNA]</scope>
</reference>
<reference key="7">
    <citation type="journal article" date="2004" name="Genome Res.">
        <title>The status, quality, and expansion of the NIH full-length cDNA project: the Mammalian Gene Collection (MGC).</title>
        <authorList>
            <consortium name="The MGC Project Team"/>
        </authorList>
    </citation>
    <scope>NUCLEOTIDE SEQUENCE [LARGE SCALE MRNA]</scope>
    <source>
        <tissue>Eye</tissue>
    </source>
</reference>
<gene>
    <name type="primary">ARHGDIG</name>
</gene>
<comment type="function">
    <text>Inhibits GDP/GTP exchange reaction of RhoB. Interacts specifically with the GDP- and GTP-bound forms of post-translationally processed Rhob and Rhog proteins, both of which show a growth-regulated expression in mammalian cells. Stimulates the release of the GDP-bound but not the GTP-bound RhoB protein. Also inhibits the GDP/GTP exchange of RhoB but shows less ability to inhibit the dissociation of prebound GTP.</text>
</comment>
<comment type="interaction">
    <interactant intactId="EBI-10295284">
        <id>Q99819</id>
    </interactant>
    <interactant intactId="EBI-1012434">
        <id>Q6AI39</id>
        <label>BICRAL</label>
    </interactant>
    <organismsDiffer>false</organismsDiffer>
    <experiments>3</experiments>
</comment>
<comment type="interaction">
    <interactant intactId="EBI-10295284">
        <id>Q99819</id>
    </interactant>
    <interactant intactId="EBI-743488">
        <id>Q96L14</id>
        <label>CEP170P1</label>
    </interactant>
    <organismsDiffer>false</organismsDiffer>
    <experiments>3</experiments>
</comment>
<comment type="interaction">
    <interactant intactId="EBI-10295284">
        <id>Q99819</id>
    </interactant>
    <interactant intactId="EBI-739657">
        <id>Q9BQD3</id>
        <label>KXD1</label>
    </interactant>
    <organismsDiffer>false</organismsDiffer>
    <experiments>3</experiments>
</comment>
<comment type="interaction">
    <interactant intactId="EBI-10295284">
        <id>Q99819</id>
    </interactant>
    <interactant intactId="EBI-394354">
        <id>Q9BTT4</id>
        <label>MED10</label>
    </interactant>
    <organismsDiffer>false</organismsDiffer>
    <experiments>3</experiments>
</comment>
<comment type="interaction">
    <interactant intactId="EBI-10295284">
        <id>Q99819</id>
    </interactant>
    <interactant intactId="EBI-2554984">
        <id>Q9Y6A5</id>
        <label>TACC3</label>
    </interactant>
    <organismsDiffer>false</organismsDiffer>
    <experiments>3</experiments>
</comment>
<comment type="subcellular location">
    <subcellularLocation>
        <location>Cytoplasm</location>
    </subcellularLocation>
</comment>
<comment type="tissue specificity">
    <text>Primarily expressed in pancreas and brain.</text>
</comment>
<comment type="similarity">
    <text evidence="1">Belongs to the Rho GDI family.</text>
</comment>
<organism>
    <name type="scientific">Homo sapiens</name>
    <name type="common">Human</name>
    <dbReference type="NCBI Taxonomy" id="9606"/>
    <lineage>
        <taxon>Eukaryota</taxon>
        <taxon>Metazoa</taxon>
        <taxon>Chordata</taxon>
        <taxon>Craniata</taxon>
        <taxon>Vertebrata</taxon>
        <taxon>Euteleostomi</taxon>
        <taxon>Mammalia</taxon>
        <taxon>Eutheria</taxon>
        <taxon>Euarchontoglires</taxon>
        <taxon>Primates</taxon>
        <taxon>Haplorrhini</taxon>
        <taxon>Catarrhini</taxon>
        <taxon>Hominidae</taxon>
        <taxon>Homo</taxon>
    </lineage>
</organism>
<name>GDIR3_HUMAN</name>
<protein>
    <recommendedName>
        <fullName>Rho GDP-dissociation inhibitor 3</fullName>
        <shortName>Rho GDI 3</shortName>
    </recommendedName>
    <alternativeName>
        <fullName>Rho-GDI gamma</fullName>
    </alternativeName>
</protein>
<dbReference type="EMBL" id="U82532">
    <property type="protein sequence ID" value="AAC33138.1"/>
    <property type="molecule type" value="mRNA"/>
</dbReference>
<dbReference type="EMBL" id="AF080237">
    <property type="protein sequence ID" value="AAC72354.1"/>
    <property type="molecule type" value="Genomic_DNA"/>
</dbReference>
<dbReference type="EMBL" id="AB127078">
    <property type="protein sequence ID" value="BAE48733.1"/>
    <property type="molecule type" value="mRNA"/>
</dbReference>
<dbReference type="EMBL" id="AF498928">
    <property type="protein sequence ID" value="AAM21076.1"/>
    <property type="molecule type" value="mRNA"/>
</dbReference>
<dbReference type="EMBL" id="AE006463">
    <property type="protein sequence ID" value="AAK61222.1"/>
    <property type="molecule type" value="Genomic_DNA"/>
</dbReference>
<dbReference type="EMBL" id="Z69667">
    <property type="protein sequence ID" value="CAI95584.1"/>
    <property type="molecule type" value="Genomic_DNA"/>
</dbReference>
<dbReference type="EMBL" id="BC047699">
    <property type="protein sequence ID" value="AAH47699.1"/>
    <property type="molecule type" value="mRNA"/>
</dbReference>
<dbReference type="CCDS" id="CCDS10404.1"/>
<dbReference type="RefSeq" id="NP_001167.2">
    <property type="nucleotide sequence ID" value="NM_001176.4"/>
</dbReference>
<dbReference type="SMR" id="Q99819"/>
<dbReference type="BioGRID" id="106891">
    <property type="interactions" value="18"/>
</dbReference>
<dbReference type="FunCoup" id="Q99819">
    <property type="interactions" value="935"/>
</dbReference>
<dbReference type="IntAct" id="Q99819">
    <property type="interactions" value="8"/>
</dbReference>
<dbReference type="MINT" id="Q99819"/>
<dbReference type="STRING" id="9606.ENSP00000219409"/>
<dbReference type="PhosphoSitePlus" id="Q99819"/>
<dbReference type="BioMuta" id="ARHGDIG"/>
<dbReference type="DMDM" id="38258951"/>
<dbReference type="MassIVE" id="Q99819"/>
<dbReference type="PaxDb" id="9606-ENSP00000219409"/>
<dbReference type="PeptideAtlas" id="Q99819"/>
<dbReference type="Antibodypedia" id="34941">
    <property type="antibodies" value="166 antibodies from 34 providers"/>
</dbReference>
<dbReference type="DNASU" id="398"/>
<dbReference type="Ensembl" id="ENST00000219409.8">
    <property type="protein sequence ID" value="ENSP00000219409.3"/>
    <property type="gene ID" value="ENSG00000242173.10"/>
</dbReference>
<dbReference type="GeneID" id="398"/>
<dbReference type="KEGG" id="hsa:398"/>
<dbReference type="MANE-Select" id="ENST00000219409.8">
    <property type="protein sequence ID" value="ENSP00000219409.3"/>
    <property type="RefSeq nucleotide sequence ID" value="NM_001176.4"/>
    <property type="RefSeq protein sequence ID" value="NP_001167.2"/>
</dbReference>
<dbReference type="UCSC" id="uc002cgm.2">
    <property type="organism name" value="human"/>
</dbReference>
<dbReference type="AGR" id="HGNC:680"/>
<dbReference type="CTD" id="398"/>
<dbReference type="DisGeNET" id="398"/>
<dbReference type="GeneCards" id="ARHGDIG"/>
<dbReference type="HGNC" id="HGNC:680">
    <property type="gene designation" value="ARHGDIG"/>
</dbReference>
<dbReference type="HPA" id="ENSG00000242173">
    <property type="expression patterns" value="Group enriched (brain, pancreas)"/>
</dbReference>
<dbReference type="MIM" id="602844">
    <property type="type" value="gene"/>
</dbReference>
<dbReference type="neXtProt" id="NX_Q99819"/>
<dbReference type="OpenTargets" id="ENSG00000242173"/>
<dbReference type="PharmGKB" id="PA24965"/>
<dbReference type="VEuPathDB" id="HostDB:ENSG00000242173"/>
<dbReference type="eggNOG" id="KOG3205">
    <property type="taxonomic scope" value="Eukaryota"/>
</dbReference>
<dbReference type="GeneTree" id="ENSGT00390000006233"/>
<dbReference type="InParanoid" id="Q99819"/>
<dbReference type="OMA" id="HICQDWE"/>
<dbReference type="OrthoDB" id="1683373at2759"/>
<dbReference type="PAN-GO" id="Q99819">
    <property type="GO annotations" value="4 GO annotations based on evolutionary models"/>
</dbReference>
<dbReference type="PhylomeDB" id="Q99819"/>
<dbReference type="TreeFam" id="TF105387"/>
<dbReference type="PathwayCommons" id="Q99819"/>
<dbReference type="Reactome" id="R-HSA-9013026">
    <property type="pathway name" value="RHOB GTPase cycle"/>
</dbReference>
<dbReference type="Reactome" id="R-HSA-9013148">
    <property type="pathway name" value="CDC42 GTPase cycle"/>
</dbReference>
<dbReference type="Reactome" id="R-HSA-9013407">
    <property type="pathway name" value="RHOH GTPase cycle"/>
</dbReference>
<dbReference type="Reactome" id="R-HSA-9013408">
    <property type="pathway name" value="RHOG GTPase cycle"/>
</dbReference>
<dbReference type="SignaLink" id="Q99819"/>
<dbReference type="BioGRID-ORCS" id="398">
    <property type="hits" value="13 hits in 1147 CRISPR screens"/>
</dbReference>
<dbReference type="ChiTaRS" id="ARHGDIG">
    <property type="organism name" value="human"/>
</dbReference>
<dbReference type="GeneWiki" id="ARHGDIG"/>
<dbReference type="GenomeRNAi" id="398"/>
<dbReference type="Pharos" id="Q99819">
    <property type="development level" value="Tbio"/>
</dbReference>
<dbReference type="PRO" id="PR:Q99819"/>
<dbReference type="Proteomes" id="UP000005640">
    <property type="component" value="Chromosome 16"/>
</dbReference>
<dbReference type="RNAct" id="Q99819">
    <property type="molecule type" value="protein"/>
</dbReference>
<dbReference type="Bgee" id="ENSG00000242173">
    <property type="expression patterns" value="Expressed in right hemisphere of cerebellum and 116 other cell types or tissues"/>
</dbReference>
<dbReference type="ExpressionAtlas" id="Q99819">
    <property type="expression patterns" value="baseline and differential"/>
</dbReference>
<dbReference type="GO" id="GO:0031410">
    <property type="term" value="C:cytoplasmic vesicle"/>
    <property type="evidence" value="ECO:0000304"/>
    <property type="project" value="ProtInc"/>
</dbReference>
<dbReference type="GO" id="GO:0005829">
    <property type="term" value="C:cytosol"/>
    <property type="evidence" value="ECO:0000314"/>
    <property type="project" value="HPA"/>
</dbReference>
<dbReference type="GO" id="GO:0016020">
    <property type="term" value="C:membrane"/>
    <property type="evidence" value="ECO:0000318"/>
    <property type="project" value="GO_Central"/>
</dbReference>
<dbReference type="GO" id="GO:0005886">
    <property type="term" value="C:plasma membrane"/>
    <property type="evidence" value="ECO:0000314"/>
    <property type="project" value="HPA"/>
</dbReference>
<dbReference type="GO" id="GO:0005096">
    <property type="term" value="F:GTPase activator activity"/>
    <property type="evidence" value="ECO:0007669"/>
    <property type="project" value="UniProtKB-KW"/>
</dbReference>
<dbReference type="GO" id="GO:0005094">
    <property type="term" value="F:Rho GDP-dissociation inhibitor activity"/>
    <property type="evidence" value="ECO:0000318"/>
    <property type="project" value="GO_Central"/>
</dbReference>
<dbReference type="GO" id="GO:0001835">
    <property type="term" value="P:blastocyst hatching"/>
    <property type="evidence" value="ECO:0007669"/>
    <property type="project" value="Ensembl"/>
</dbReference>
<dbReference type="GO" id="GO:0007162">
    <property type="term" value="P:negative regulation of cell adhesion"/>
    <property type="evidence" value="ECO:0000304"/>
    <property type="project" value="ProtInc"/>
</dbReference>
<dbReference type="GO" id="GO:0032880">
    <property type="term" value="P:regulation of protein localization"/>
    <property type="evidence" value="ECO:0007669"/>
    <property type="project" value="Ensembl"/>
</dbReference>
<dbReference type="GO" id="GO:0007266">
    <property type="term" value="P:Rho protein signal transduction"/>
    <property type="evidence" value="ECO:0000318"/>
    <property type="project" value="GO_Central"/>
</dbReference>
<dbReference type="FunFam" id="2.70.50.30:FF:000004">
    <property type="entry name" value="Rho GDP-dissociation inhibitor 1"/>
    <property type="match status" value="1"/>
</dbReference>
<dbReference type="Gene3D" id="2.70.50.30">
    <property type="entry name" value="Coagulation Factor XIII, subunit A, domain 1"/>
    <property type="match status" value="1"/>
</dbReference>
<dbReference type="InterPro" id="IPR014756">
    <property type="entry name" value="Ig_E-set"/>
</dbReference>
<dbReference type="InterPro" id="IPR000406">
    <property type="entry name" value="Rho_GDI"/>
</dbReference>
<dbReference type="InterPro" id="IPR024792">
    <property type="entry name" value="RhoGDI_dom_sf"/>
</dbReference>
<dbReference type="PANTHER" id="PTHR10980">
    <property type="entry name" value="RHO GDP-DISSOCIATION INHIBITOR"/>
    <property type="match status" value="1"/>
</dbReference>
<dbReference type="PANTHER" id="PTHR10980:SF8">
    <property type="entry name" value="RHO GDP-DISSOCIATION INHIBITOR 3"/>
    <property type="match status" value="1"/>
</dbReference>
<dbReference type="Pfam" id="PF02115">
    <property type="entry name" value="Rho_GDI"/>
    <property type="match status" value="1"/>
</dbReference>
<dbReference type="PRINTS" id="PR00492">
    <property type="entry name" value="RHOGDI"/>
</dbReference>
<dbReference type="SUPFAM" id="SSF81296">
    <property type="entry name" value="E set domains"/>
    <property type="match status" value="1"/>
</dbReference>
<keyword id="KW-0963">Cytoplasm</keyword>
<keyword id="KW-0343">GTPase activation</keyword>
<keyword id="KW-1267">Proteomics identification</keyword>
<keyword id="KW-1185">Reference proteome</keyword>
<sequence>MLGLDACELGAQLLELLRLALCARVLLADKEGGPPAVDEVLDEAVPEYRAPGRKSLLEIRQLDPDDRSLAKYKRVLLGPLPPAVDPSLPNVQVTRLTLLSEQAPGPVVMDLTGDLAVLKDQVFVLKEGVDYRVKISFKVHREIVSGLKCLHHTYRRGLRVDKTVYMVGSYGPSAQEYEFVTPVEEAPRGALVRGPYLVVSLFTDDDRTHHLSWEWGLCICQDWKD</sequence>
<proteinExistence type="evidence at protein level"/>
<evidence type="ECO:0000305" key="1"/>
<feature type="chain" id="PRO_0000219018" description="Rho GDP-dissociation inhibitor 3">
    <location>
        <begin position="1"/>
        <end position="225"/>
    </location>
</feature>
<feature type="sequence conflict" description="In Ref. 1 and 2." evidence="1" ref="1 2">
    <original>D</original>
    <variation>N</variation>
    <location>
        <position position="114"/>
    </location>
</feature>